<reference key="1">
    <citation type="journal article" date="2007" name="PLoS Genet.">
        <title>Patterns and implications of gene gain and loss in the evolution of Prochlorococcus.</title>
        <authorList>
            <person name="Kettler G.C."/>
            <person name="Martiny A.C."/>
            <person name="Huang K."/>
            <person name="Zucker J."/>
            <person name="Coleman M.L."/>
            <person name="Rodrigue S."/>
            <person name="Chen F."/>
            <person name="Lapidus A."/>
            <person name="Ferriera S."/>
            <person name="Johnson J."/>
            <person name="Steglich C."/>
            <person name="Church G.M."/>
            <person name="Richardson P."/>
            <person name="Chisholm S.W."/>
        </authorList>
    </citation>
    <scope>NUCLEOTIDE SEQUENCE [LARGE SCALE GENOMIC DNA]</scope>
    <source>
        <strain>MIT 9515</strain>
    </source>
</reference>
<sequence>MNVSHNSSIDHNDLAKRGESLIRKSTNRYLTTVRIAFRAKQRRFDDFDGLLEESSIKPVQRSIIELSDEQDQPDLLPG</sequence>
<gene>
    <name evidence="1" type="primary">rpoZ</name>
    <name type="ordered locus">P9515_16091</name>
</gene>
<dbReference type="EC" id="2.7.7.6" evidence="1"/>
<dbReference type="EMBL" id="CP000552">
    <property type="protein sequence ID" value="ABM72816.1"/>
    <property type="molecule type" value="Genomic_DNA"/>
</dbReference>
<dbReference type="RefSeq" id="WP_011820911.1">
    <property type="nucleotide sequence ID" value="NC_008817.1"/>
</dbReference>
<dbReference type="SMR" id="A2BYF5"/>
<dbReference type="STRING" id="167542.P9515_16091"/>
<dbReference type="GeneID" id="60200949"/>
<dbReference type="KEGG" id="pmc:P9515_16091"/>
<dbReference type="eggNOG" id="ENOG5032RMS">
    <property type="taxonomic scope" value="Bacteria"/>
</dbReference>
<dbReference type="HOGENOM" id="CLU_175526_0_0_3"/>
<dbReference type="OrthoDB" id="463386at2"/>
<dbReference type="Proteomes" id="UP000001589">
    <property type="component" value="Chromosome"/>
</dbReference>
<dbReference type="GO" id="GO:0000428">
    <property type="term" value="C:DNA-directed RNA polymerase complex"/>
    <property type="evidence" value="ECO:0007669"/>
    <property type="project" value="UniProtKB-KW"/>
</dbReference>
<dbReference type="GO" id="GO:0003677">
    <property type="term" value="F:DNA binding"/>
    <property type="evidence" value="ECO:0007669"/>
    <property type="project" value="UniProtKB-UniRule"/>
</dbReference>
<dbReference type="GO" id="GO:0003899">
    <property type="term" value="F:DNA-directed RNA polymerase activity"/>
    <property type="evidence" value="ECO:0007669"/>
    <property type="project" value="UniProtKB-UniRule"/>
</dbReference>
<dbReference type="GO" id="GO:0006351">
    <property type="term" value="P:DNA-templated transcription"/>
    <property type="evidence" value="ECO:0007669"/>
    <property type="project" value="UniProtKB-UniRule"/>
</dbReference>
<dbReference type="HAMAP" id="MF_00366">
    <property type="entry name" value="RNApol_bact_RpoZ"/>
    <property type="match status" value="1"/>
</dbReference>
<dbReference type="InterPro" id="IPR003716">
    <property type="entry name" value="DNA-dir_RNA_pol_omega"/>
</dbReference>
<dbReference type="InterPro" id="IPR006110">
    <property type="entry name" value="Pol_omega/Rpo6/RPB6"/>
</dbReference>
<dbReference type="NCBIfam" id="NF001574">
    <property type="entry name" value="PRK00392.2-5"/>
    <property type="match status" value="1"/>
</dbReference>
<dbReference type="Pfam" id="PF01192">
    <property type="entry name" value="RNA_pol_Rpb6"/>
    <property type="match status" value="1"/>
</dbReference>
<feature type="chain" id="PRO_1000005975" description="DNA-directed RNA polymerase subunit omega">
    <location>
        <begin position="1"/>
        <end position="78"/>
    </location>
</feature>
<name>RPOZ_PROM5</name>
<keyword id="KW-0240">DNA-directed RNA polymerase</keyword>
<keyword id="KW-0548">Nucleotidyltransferase</keyword>
<keyword id="KW-0804">Transcription</keyword>
<keyword id="KW-0808">Transferase</keyword>
<accession>A2BYF5</accession>
<protein>
    <recommendedName>
        <fullName evidence="1">DNA-directed RNA polymerase subunit omega</fullName>
        <shortName evidence="1">RNAP omega subunit</shortName>
        <ecNumber evidence="1">2.7.7.6</ecNumber>
    </recommendedName>
    <alternativeName>
        <fullName evidence="1">RNA polymerase omega subunit</fullName>
    </alternativeName>
    <alternativeName>
        <fullName evidence="1">Transcriptase subunit omega</fullName>
    </alternativeName>
</protein>
<evidence type="ECO:0000255" key="1">
    <source>
        <dbReference type="HAMAP-Rule" id="MF_00366"/>
    </source>
</evidence>
<proteinExistence type="inferred from homology"/>
<comment type="function">
    <text evidence="1">Promotes RNA polymerase assembly. Latches the N- and C-terminal regions of the beta' subunit thereby facilitating its interaction with the beta and alpha subunits.</text>
</comment>
<comment type="catalytic activity">
    <reaction evidence="1">
        <text>RNA(n) + a ribonucleoside 5'-triphosphate = RNA(n+1) + diphosphate</text>
        <dbReference type="Rhea" id="RHEA:21248"/>
        <dbReference type="Rhea" id="RHEA-COMP:14527"/>
        <dbReference type="Rhea" id="RHEA-COMP:17342"/>
        <dbReference type="ChEBI" id="CHEBI:33019"/>
        <dbReference type="ChEBI" id="CHEBI:61557"/>
        <dbReference type="ChEBI" id="CHEBI:140395"/>
        <dbReference type="EC" id="2.7.7.6"/>
    </reaction>
</comment>
<comment type="subunit">
    <text evidence="1">In cyanobacteria the RNAP catalytic core is composed of 2 alpha, 1 beta, 1 beta', 1 gamma and 1 omega subunit. When a sigma factor is associated with the core the holoenzyme is formed, which can initiate transcription.</text>
</comment>
<comment type="similarity">
    <text evidence="1">Belongs to the RNA polymerase subunit omega family.</text>
</comment>
<organism>
    <name type="scientific">Prochlorococcus marinus (strain MIT 9515)</name>
    <dbReference type="NCBI Taxonomy" id="167542"/>
    <lineage>
        <taxon>Bacteria</taxon>
        <taxon>Bacillati</taxon>
        <taxon>Cyanobacteriota</taxon>
        <taxon>Cyanophyceae</taxon>
        <taxon>Synechococcales</taxon>
        <taxon>Prochlorococcaceae</taxon>
        <taxon>Prochlorococcus</taxon>
    </lineage>
</organism>